<sequence>MANYDVLKLDGTKSGSIELSDAVFGIEPNNSVLFEAINLQRASLRQGTHAVKNRSAVSGGGRKPWKQKGTGRARQGTIRAPQWRGGGIVFGPTPRSYAYKMPKKMRRLALRSALSFKAQENGLTVVDAFNFEAPKTKEFKNVLSTLEQPKKVLVVTENEDVNVELSARNIPGVQVTTAQGLNVLDITNADSLVITEAAAKKVEEVLG</sequence>
<reference key="1">
    <citation type="journal article" date="2004" name="Proc. Natl. Acad. Sci. U.S.A.">
        <title>Complete genomes of two clinical Staphylococcus aureus strains: evidence for the rapid evolution of virulence and drug resistance.</title>
        <authorList>
            <person name="Holden M.T.G."/>
            <person name="Feil E.J."/>
            <person name="Lindsay J.A."/>
            <person name="Peacock S.J."/>
            <person name="Day N.P.J."/>
            <person name="Enright M.C."/>
            <person name="Foster T.J."/>
            <person name="Moore C.E."/>
            <person name="Hurst L."/>
            <person name="Atkin R."/>
            <person name="Barron A."/>
            <person name="Bason N."/>
            <person name="Bentley S.D."/>
            <person name="Chillingworth C."/>
            <person name="Chillingworth T."/>
            <person name="Churcher C."/>
            <person name="Clark L."/>
            <person name="Corton C."/>
            <person name="Cronin A."/>
            <person name="Doggett J."/>
            <person name="Dowd L."/>
            <person name="Feltwell T."/>
            <person name="Hance Z."/>
            <person name="Harris B."/>
            <person name="Hauser H."/>
            <person name="Holroyd S."/>
            <person name="Jagels K."/>
            <person name="James K.D."/>
            <person name="Lennard N."/>
            <person name="Line A."/>
            <person name="Mayes R."/>
            <person name="Moule S."/>
            <person name="Mungall K."/>
            <person name="Ormond D."/>
            <person name="Quail M.A."/>
            <person name="Rabbinowitsch E."/>
            <person name="Rutherford K.M."/>
            <person name="Sanders M."/>
            <person name="Sharp S."/>
            <person name="Simmonds M."/>
            <person name="Stevens K."/>
            <person name="Whitehead S."/>
            <person name="Barrell B.G."/>
            <person name="Spratt B.G."/>
            <person name="Parkhill J."/>
        </authorList>
    </citation>
    <scope>NUCLEOTIDE SEQUENCE [LARGE SCALE GENOMIC DNA]</scope>
    <source>
        <strain>MSSA476</strain>
    </source>
</reference>
<proteinExistence type="inferred from homology"/>
<feature type="chain" id="PRO_0000129278" description="Large ribosomal subunit protein uL4">
    <location>
        <begin position="1"/>
        <end position="207"/>
    </location>
</feature>
<feature type="region of interest" description="Disordered" evidence="2">
    <location>
        <begin position="50"/>
        <end position="76"/>
    </location>
</feature>
<protein>
    <recommendedName>
        <fullName evidence="1">Large ribosomal subunit protein uL4</fullName>
    </recommendedName>
    <alternativeName>
        <fullName evidence="3">50S ribosomal protein L4</fullName>
    </alternativeName>
</protein>
<accession>Q6G772</accession>
<organism>
    <name type="scientific">Staphylococcus aureus (strain MSSA476)</name>
    <dbReference type="NCBI Taxonomy" id="282459"/>
    <lineage>
        <taxon>Bacteria</taxon>
        <taxon>Bacillati</taxon>
        <taxon>Bacillota</taxon>
        <taxon>Bacilli</taxon>
        <taxon>Bacillales</taxon>
        <taxon>Staphylococcaceae</taxon>
        <taxon>Staphylococcus</taxon>
    </lineage>
</organism>
<gene>
    <name evidence="1" type="primary">rplD</name>
    <name type="ordered locus">SAS2140</name>
</gene>
<dbReference type="EMBL" id="BX571857">
    <property type="protein sequence ID" value="CAG43951.1"/>
    <property type="molecule type" value="Genomic_DNA"/>
</dbReference>
<dbReference type="RefSeq" id="WP_000024827.1">
    <property type="nucleotide sequence ID" value="NC_002953.3"/>
</dbReference>
<dbReference type="SMR" id="Q6G772"/>
<dbReference type="KEGG" id="sas:SAS2140"/>
<dbReference type="HOGENOM" id="CLU_041575_5_2_9"/>
<dbReference type="GO" id="GO:1990904">
    <property type="term" value="C:ribonucleoprotein complex"/>
    <property type="evidence" value="ECO:0007669"/>
    <property type="project" value="UniProtKB-KW"/>
</dbReference>
<dbReference type="GO" id="GO:0005840">
    <property type="term" value="C:ribosome"/>
    <property type="evidence" value="ECO:0007669"/>
    <property type="project" value="UniProtKB-KW"/>
</dbReference>
<dbReference type="GO" id="GO:0019843">
    <property type="term" value="F:rRNA binding"/>
    <property type="evidence" value="ECO:0007669"/>
    <property type="project" value="UniProtKB-UniRule"/>
</dbReference>
<dbReference type="GO" id="GO:0003735">
    <property type="term" value="F:structural constituent of ribosome"/>
    <property type="evidence" value="ECO:0007669"/>
    <property type="project" value="InterPro"/>
</dbReference>
<dbReference type="GO" id="GO:0006412">
    <property type="term" value="P:translation"/>
    <property type="evidence" value="ECO:0007669"/>
    <property type="project" value="UniProtKB-UniRule"/>
</dbReference>
<dbReference type="FunFam" id="3.40.1370.10:FF:000003">
    <property type="entry name" value="50S ribosomal protein L4"/>
    <property type="match status" value="1"/>
</dbReference>
<dbReference type="Gene3D" id="3.40.1370.10">
    <property type="match status" value="1"/>
</dbReference>
<dbReference type="HAMAP" id="MF_01328_B">
    <property type="entry name" value="Ribosomal_uL4_B"/>
    <property type="match status" value="1"/>
</dbReference>
<dbReference type="InterPro" id="IPR002136">
    <property type="entry name" value="Ribosomal_uL4"/>
</dbReference>
<dbReference type="InterPro" id="IPR013005">
    <property type="entry name" value="Ribosomal_uL4-like"/>
</dbReference>
<dbReference type="InterPro" id="IPR023574">
    <property type="entry name" value="Ribosomal_uL4_dom_sf"/>
</dbReference>
<dbReference type="NCBIfam" id="TIGR03953">
    <property type="entry name" value="rplD_bact"/>
    <property type="match status" value="1"/>
</dbReference>
<dbReference type="PANTHER" id="PTHR10746">
    <property type="entry name" value="50S RIBOSOMAL PROTEIN L4"/>
    <property type="match status" value="1"/>
</dbReference>
<dbReference type="PANTHER" id="PTHR10746:SF6">
    <property type="entry name" value="LARGE RIBOSOMAL SUBUNIT PROTEIN UL4M"/>
    <property type="match status" value="1"/>
</dbReference>
<dbReference type="Pfam" id="PF00573">
    <property type="entry name" value="Ribosomal_L4"/>
    <property type="match status" value="1"/>
</dbReference>
<dbReference type="SUPFAM" id="SSF52166">
    <property type="entry name" value="Ribosomal protein L4"/>
    <property type="match status" value="1"/>
</dbReference>
<name>RL4_STAAS</name>
<keyword id="KW-0687">Ribonucleoprotein</keyword>
<keyword id="KW-0689">Ribosomal protein</keyword>
<keyword id="KW-0694">RNA-binding</keyword>
<keyword id="KW-0699">rRNA-binding</keyword>
<comment type="function">
    <text evidence="1">One of the primary rRNA binding proteins, this protein initially binds near the 5'-end of the 23S rRNA. It is important during the early stages of 50S assembly. It makes multiple contacts with different domains of the 23S rRNA in the assembled 50S subunit and ribosome.</text>
</comment>
<comment type="function">
    <text evidence="1">Forms part of the polypeptide exit tunnel.</text>
</comment>
<comment type="subunit">
    <text evidence="1">Part of the 50S ribosomal subunit.</text>
</comment>
<comment type="similarity">
    <text evidence="1">Belongs to the universal ribosomal protein uL4 family.</text>
</comment>
<evidence type="ECO:0000255" key="1">
    <source>
        <dbReference type="HAMAP-Rule" id="MF_01328"/>
    </source>
</evidence>
<evidence type="ECO:0000256" key="2">
    <source>
        <dbReference type="SAM" id="MobiDB-lite"/>
    </source>
</evidence>
<evidence type="ECO:0000305" key="3"/>